<protein>
    <recommendedName>
        <fullName>Glycine-rich RNA-binding protein 1</fullName>
    </recommendedName>
</protein>
<proteinExistence type="evidence at protein level"/>
<feature type="chain" id="PRO_0000081602" description="Glycine-rich RNA-binding protein 1">
    <location>
        <begin position="1" status="less than"/>
        <end position="11" status="greater than"/>
    </location>
</feature>
<feature type="domain" description="RRM" evidence="1">
    <location>
        <begin position="1" status="less than"/>
        <end position="11" status="greater than"/>
    </location>
</feature>
<feature type="non-terminal residue">
    <location>
        <position position="1"/>
    </location>
</feature>
<feature type="non-terminal residue">
    <location>
        <position position="11"/>
    </location>
</feature>
<organism>
    <name type="scientific">Populus euphratica</name>
    <name type="common">Euphrates poplar</name>
    <dbReference type="NCBI Taxonomy" id="75702"/>
    <lineage>
        <taxon>Eukaryota</taxon>
        <taxon>Viridiplantae</taxon>
        <taxon>Streptophyta</taxon>
        <taxon>Embryophyta</taxon>
        <taxon>Tracheophyta</taxon>
        <taxon>Spermatophyta</taxon>
        <taxon>Magnoliopsida</taxon>
        <taxon>eudicotyledons</taxon>
        <taxon>Gunneridae</taxon>
        <taxon>Pentapetalae</taxon>
        <taxon>rosids</taxon>
        <taxon>fabids</taxon>
        <taxon>Malpighiales</taxon>
        <taxon>Salicaceae</taxon>
        <taxon>Saliceae</taxon>
        <taxon>Populus</taxon>
    </lineage>
</organism>
<evidence type="ECO:0000255" key="1">
    <source>
        <dbReference type="PROSITE-ProRule" id="PRU00176"/>
    </source>
</evidence>
<reference key="1">
    <citation type="journal article" date="2006" name="Ann. Bot.">
        <title>Proteome profiling of Populus euphratica Oliv. upon heat stress.</title>
        <authorList>
            <person name="Ferreira S."/>
            <person name="Hjernoe K."/>
            <person name="Larsen M."/>
            <person name="Wingsle G."/>
            <person name="Larsen P."/>
            <person name="Fey S."/>
            <person name="Roepstorff P."/>
            <person name="Pais M.S."/>
        </authorList>
    </citation>
    <scope>PROTEIN SEQUENCE</scope>
    <source>
        <tissue>Leaf</tissue>
    </source>
</reference>
<accession>P84560</accession>
<name>GRP1_POPEU</name>
<sequence>GFGFVTFGNEK</sequence>
<keyword id="KW-0903">Direct protein sequencing</keyword>
<keyword id="KW-1185">Reference proteome</keyword>
<keyword id="KW-0694">RNA-binding</keyword>
<dbReference type="Proteomes" id="UP000694918">
    <property type="component" value="Unplaced"/>
</dbReference>
<dbReference type="GO" id="GO:0003723">
    <property type="term" value="F:RNA binding"/>
    <property type="evidence" value="ECO:0007669"/>
    <property type="project" value="UniProtKB-KW"/>
</dbReference>